<evidence type="ECO:0000255" key="1">
    <source>
        <dbReference type="HAMAP-Rule" id="MF_01615"/>
    </source>
</evidence>
<evidence type="ECO:0000305" key="2"/>
<gene>
    <name evidence="1" type="primary">pdxT</name>
    <name type="ordered locus">OB2686</name>
</gene>
<organism>
    <name type="scientific">Oceanobacillus iheyensis (strain DSM 14371 / CIP 107618 / JCM 11309 / KCTC 3954 / HTE831)</name>
    <dbReference type="NCBI Taxonomy" id="221109"/>
    <lineage>
        <taxon>Bacteria</taxon>
        <taxon>Bacillati</taxon>
        <taxon>Bacillota</taxon>
        <taxon>Bacilli</taxon>
        <taxon>Bacillales</taxon>
        <taxon>Bacillaceae</taxon>
        <taxon>Oceanobacillus</taxon>
    </lineage>
</organism>
<proteinExistence type="inferred from homology"/>
<reference key="1">
    <citation type="journal article" date="2002" name="Nucleic Acids Res.">
        <title>Genome sequence of Oceanobacillus iheyensis isolated from the Iheya Ridge and its unexpected adaptive capabilities to extreme environments.</title>
        <authorList>
            <person name="Takami H."/>
            <person name="Takaki Y."/>
            <person name="Uchiyama I."/>
        </authorList>
    </citation>
    <scope>NUCLEOTIDE SEQUENCE [LARGE SCALE GENOMIC DNA]</scope>
    <source>
        <strain>DSM 14371 / CIP 107618 / JCM 11309 / KCTC 3954 / HTE831</strain>
    </source>
</reference>
<comment type="function">
    <text evidence="1">Catalyzes the hydrolysis of glutamine to glutamate and ammonia as part of the biosynthesis of pyridoxal 5'-phosphate. The resulting ammonia molecule is channeled to the active site of PdxS.</text>
</comment>
<comment type="catalytic activity">
    <reaction evidence="1">
        <text>aldehydo-D-ribose 5-phosphate + D-glyceraldehyde 3-phosphate + L-glutamine = pyridoxal 5'-phosphate + L-glutamate + phosphate + 3 H2O + H(+)</text>
        <dbReference type="Rhea" id="RHEA:31507"/>
        <dbReference type="ChEBI" id="CHEBI:15377"/>
        <dbReference type="ChEBI" id="CHEBI:15378"/>
        <dbReference type="ChEBI" id="CHEBI:29985"/>
        <dbReference type="ChEBI" id="CHEBI:43474"/>
        <dbReference type="ChEBI" id="CHEBI:58273"/>
        <dbReference type="ChEBI" id="CHEBI:58359"/>
        <dbReference type="ChEBI" id="CHEBI:59776"/>
        <dbReference type="ChEBI" id="CHEBI:597326"/>
        <dbReference type="EC" id="4.3.3.6"/>
    </reaction>
</comment>
<comment type="catalytic activity">
    <reaction evidence="1">
        <text>L-glutamine + H2O = L-glutamate + NH4(+)</text>
        <dbReference type="Rhea" id="RHEA:15889"/>
        <dbReference type="ChEBI" id="CHEBI:15377"/>
        <dbReference type="ChEBI" id="CHEBI:28938"/>
        <dbReference type="ChEBI" id="CHEBI:29985"/>
        <dbReference type="ChEBI" id="CHEBI:58359"/>
        <dbReference type="EC" id="3.5.1.2"/>
    </reaction>
</comment>
<comment type="pathway">
    <text evidence="1">Cofactor biosynthesis; pyridoxal 5'-phosphate biosynthesis.</text>
</comment>
<comment type="subunit">
    <text evidence="1">In the presence of PdxS, forms a dodecamer of heterodimers. Only shows activity in the heterodimer.</text>
</comment>
<comment type="similarity">
    <text evidence="1">Belongs to the glutaminase PdxT/SNO family.</text>
</comment>
<comment type="sequence caution" evidence="2">
    <conflict type="erroneous initiation">
        <sequence resource="EMBL-CDS" id="BAC14642"/>
    </conflict>
</comment>
<dbReference type="EC" id="4.3.3.6" evidence="1"/>
<dbReference type="EC" id="3.5.1.2" evidence="1"/>
<dbReference type="EMBL" id="BA000028">
    <property type="protein sequence ID" value="BAC14642.1"/>
    <property type="status" value="ALT_INIT"/>
    <property type="molecule type" value="Genomic_DNA"/>
</dbReference>
<dbReference type="RefSeq" id="WP_041544302.1">
    <property type="nucleotide sequence ID" value="NC_004193.1"/>
</dbReference>
<dbReference type="SMR" id="Q8EN04"/>
<dbReference type="STRING" id="221109.gene:10734938"/>
<dbReference type="MEROPS" id="C26.A32"/>
<dbReference type="KEGG" id="oih:OB2686"/>
<dbReference type="eggNOG" id="COG0311">
    <property type="taxonomic scope" value="Bacteria"/>
</dbReference>
<dbReference type="HOGENOM" id="CLU_069674_2_0_9"/>
<dbReference type="OrthoDB" id="9810320at2"/>
<dbReference type="PhylomeDB" id="Q8EN04"/>
<dbReference type="UniPathway" id="UPA00245"/>
<dbReference type="Proteomes" id="UP000000822">
    <property type="component" value="Chromosome"/>
</dbReference>
<dbReference type="GO" id="GO:0005829">
    <property type="term" value="C:cytosol"/>
    <property type="evidence" value="ECO:0007669"/>
    <property type="project" value="TreeGrafter"/>
</dbReference>
<dbReference type="GO" id="GO:1903600">
    <property type="term" value="C:glutaminase complex"/>
    <property type="evidence" value="ECO:0007669"/>
    <property type="project" value="TreeGrafter"/>
</dbReference>
<dbReference type="GO" id="GO:0004359">
    <property type="term" value="F:glutaminase activity"/>
    <property type="evidence" value="ECO:0007669"/>
    <property type="project" value="UniProtKB-UniRule"/>
</dbReference>
<dbReference type="GO" id="GO:0036381">
    <property type="term" value="F:pyridoxal 5'-phosphate synthase (glutamine hydrolysing) activity"/>
    <property type="evidence" value="ECO:0007669"/>
    <property type="project" value="UniProtKB-UniRule"/>
</dbReference>
<dbReference type="GO" id="GO:0006543">
    <property type="term" value="P:glutamine catabolic process"/>
    <property type="evidence" value="ECO:0007669"/>
    <property type="project" value="UniProtKB-UniRule"/>
</dbReference>
<dbReference type="GO" id="GO:0042823">
    <property type="term" value="P:pyridoxal phosphate biosynthetic process"/>
    <property type="evidence" value="ECO:0007669"/>
    <property type="project" value="UniProtKB-UniRule"/>
</dbReference>
<dbReference type="GO" id="GO:0008614">
    <property type="term" value="P:pyridoxine metabolic process"/>
    <property type="evidence" value="ECO:0007669"/>
    <property type="project" value="TreeGrafter"/>
</dbReference>
<dbReference type="CDD" id="cd01749">
    <property type="entry name" value="GATase1_PB"/>
    <property type="match status" value="1"/>
</dbReference>
<dbReference type="FunFam" id="3.40.50.880:FF:000010">
    <property type="entry name" value="uncharacterized protein LOC100176842 isoform X2"/>
    <property type="match status" value="1"/>
</dbReference>
<dbReference type="Gene3D" id="3.40.50.880">
    <property type="match status" value="1"/>
</dbReference>
<dbReference type="HAMAP" id="MF_01615">
    <property type="entry name" value="PdxT"/>
    <property type="match status" value="1"/>
</dbReference>
<dbReference type="InterPro" id="IPR029062">
    <property type="entry name" value="Class_I_gatase-like"/>
</dbReference>
<dbReference type="InterPro" id="IPR002161">
    <property type="entry name" value="PdxT/SNO"/>
</dbReference>
<dbReference type="InterPro" id="IPR021196">
    <property type="entry name" value="PdxT/SNO_CS"/>
</dbReference>
<dbReference type="NCBIfam" id="TIGR03800">
    <property type="entry name" value="PLP_synth_Pdx2"/>
    <property type="match status" value="1"/>
</dbReference>
<dbReference type="PANTHER" id="PTHR31559">
    <property type="entry name" value="PYRIDOXAL 5'-PHOSPHATE SYNTHASE SUBUNIT SNO"/>
    <property type="match status" value="1"/>
</dbReference>
<dbReference type="PANTHER" id="PTHR31559:SF0">
    <property type="entry name" value="PYRIDOXAL 5'-PHOSPHATE SYNTHASE SUBUNIT SNO1-RELATED"/>
    <property type="match status" value="1"/>
</dbReference>
<dbReference type="Pfam" id="PF01174">
    <property type="entry name" value="SNO"/>
    <property type="match status" value="1"/>
</dbReference>
<dbReference type="PIRSF" id="PIRSF005639">
    <property type="entry name" value="Glut_amidoT_SNO"/>
    <property type="match status" value="1"/>
</dbReference>
<dbReference type="SUPFAM" id="SSF52317">
    <property type="entry name" value="Class I glutamine amidotransferase-like"/>
    <property type="match status" value="1"/>
</dbReference>
<dbReference type="PROSITE" id="PS01236">
    <property type="entry name" value="PDXT_SNO_1"/>
    <property type="match status" value="1"/>
</dbReference>
<dbReference type="PROSITE" id="PS51130">
    <property type="entry name" value="PDXT_SNO_2"/>
    <property type="match status" value="1"/>
</dbReference>
<name>PDXT_OCEIH</name>
<protein>
    <recommendedName>
        <fullName evidence="1">Pyridoxal 5'-phosphate synthase subunit PdxT</fullName>
        <ecNumber evidence="1">4.3.3.6</ecNumber>
    </recommendedName>
    <alternativeName>
        <fullName evidence="1">Pdx2</fullName>
    </alternativeName>
    <alternativeName>
        <fullName evidence="1">Pyridoxal 5'-phosphate synthase glutaminase subunit</fullName>
        <ecNumber evidence="1">3.5.1.2</ecNumber>
    </alternativeName>
</protein>
<keyword id="KW-0315">Glutamine amidotransferase</keyword>
<keyword id="KW-0378">Hydrolase</keyword>
<keyword id="KW-0456">Lyase</keyword>
<keyword id="KW-0663">Pyridoxal phosphate</keyword>
<keyword id="KW-1185">Reference proteome</keyword>
<accession>Q8EN04</accession>
<sequence length="200" mass="22414">MCNSFRIGVLGLQGAISEHVNRLKELEQQPVVVKKSTDLHQLDGLIIPGGESTAIWKLIEENKLYEPIQNFANEGKAIFGTCAGLVLLSKTTIGRDYTPTLKLMDITVQRNGFGRQKDSFEATIQAKYMDDSYHAVFIRAPYIESVGEGVEVIASYNDKIVAARQKNVLVCAFHPELTDDDRFLEMFLTMISSNKNFNHV</sequence>
<feature type="chain" id="PRO_0000135651" description="Pyridoxal 5'-phosphate synthase subunit PdxT">
    <location>
        <begin position="1"/>
        <end position="200"/>
    </location>
</feature>
<feature type="active site" description="Nucleophile" evidence="1">
    <location>
        <position position="82"/>
    </location>
</feature>
<feature type="active site" description="Charge relay system" evidence="1">
    <location>
        <position position="174"/>
    </location>
</feature>
<feature type="active site" description="Charge relay system" evidence="1">
    <location>
        <position position="176"/>
    </location>
</feature>
<feature type="binding site" evidence="1">
    <location>
        <begin position="50"/>
        <end position="52"/>
    </location>
    <ligand>
        <name>L-glutamine</name>
        <dbReference type="ChEBI" id="CHEBI:58359"/>
    </ligand>
</feature>
<feature type="binding site" evidence="1">
    <location>
        <position position="110"/>
    </location>
    <ligand>
        <name>L-glutamine</name>
        <dbReference type="ChEBI" id="CHEBI:58359"/>
    </ligand>
</feature>
<feature type="binding site" evidence="1">
    <location>
        <begin position="138"/>
        <end position="139"/>
    </location>
    <ligand>
        <name>L-glutamine</name>
        <dbReference type="ChEBI" id="CHEBI:58359"/>
    </ligand>
</feature>